<accession>P19960</accession>
<dbReference type="EMBL" id="X13372">
    <property type="protein sequence ID" value="CAA31747.1"/>
    <property type="molecule type" value="mRNA"/>
</dbReference>
<dbReference type="PIR" id="B34019">
    <property type="entry name" value="B34019"/>
</dbReference>
<dbReference type="SMR" id="P19960"/>
<dbReference type="GO" id="GO:0005576">
    <property type="term" value="C:extracellular region"/>
    <property type="evidence" value="ECO:0007669"/>
    <property type="project" value="UniProtKB-SubCell"/>
</dbReference>
<dbReference type="GO" id="GO:0030550">
    <property type="term" value="F:acetylcholine receptor inhibitor activity"/>
    <property type="evidence" value="ECO:0007669"/>
    <property type="project" value="UniProtKB-KW"/>
</dbReference>
<dbReference type="GO" id="GO:0099106">
    <property type="term" value="F:ion channel regulator activity"/>
    <property type="evidence" value="ECO:0007669"/>
    <property type="project" value="UniProtKB-KW"/>
</dbReference>
<dbReference type="GO" id="GO:0090729">
    <property type="term" value="F:toxin activity"/>
    <property type="evidence" value="ECO:0007669"/>
    <property type="project" value="UniProtKB-KW"/>
</dbReference>
<dbReference type="CDD" id="cd00206">
    <property type="entry name" value="TFP_snake_toxin"/>
    <property type="match status" value="1"/>
</dbReference>
<dbReference type="Gene3D" id="2.10.60.10">
    <property type="entry name" value="CD59"/>
    <property type="match status" value="1"/>
</dbReference>
<dbReference type="InterPro" id="IPR003571">
    <property type="entry name" value="Snake_3FTx"/>
</dbReference>
<dbReference type="InterPro" id="IPR045860">
    <property type="entry name" value="Snake_toxin-like_sf"/>
</dbReference>
<dbReference type="InterPro" id="IPR018354">
    <property type="entry name" value="Snake_toxin_con_site"/>
</dbReference>
<dbReference type="InterPro" id="IPR054131">
    <property type="entry name" value="Toxin_cobra-type"/>
</dbReference>
<dbReference type="Pfam" id="PF21947">
    <property type="entry name" value="Toxin_cobra-type"/>
    <property type="match status" value="1"/>
</dbReference>
<dbReference type="SUPFAM" id="SSF57302">
    <property type="entry name" value="Snake toxin-like"/>
    <property type="match status" value="1"/>
</dbReference>
<dbReference type="PROSITE" id="PS00272">
    <property type="entry name" value="SNAKE_TOXIN"/>
    <property type="match status" value="1"/>
</dbReference>
<proteinExistence type="inferred from homology"/>
<protein>
    <recommendedName>
        <fullName>Short neurotoxin D</fullName>
    </recommendedName>
</protein>
<feature type="signal peptide" evidence="4">
    <location>
        <begin position="1"/>
        <end position="21"/>
    </location>
</feature>
<feature type="chain" id="PRO_0000035434" description="Short neurotoxin D">
    <location>
        <begin position="22"/>
        <end position="81"/>
    </location>
</feature>
<feature type="disulfide bond" evidence="2">
    <location>
        <begin position="24"/>
        <end position="43"/>
    </location>
</feature>
<feature type="disulfide bond" evidence="2">
    <location>
        <begin position="38"/>
        <end position="60"/>
    </location>
</feature>
<feature type="disulfide bond" evidence="2">
    <location>
        <begin position="62"/>
        <end position="73"/>
    </location>
</feature>
<feature type="disulfide bond" evidence="2">
    <location>
        <begin position="74"/>
        <end position="79"/>
    </location>
</feature>
<keyword id="KW-0008">Acetylcholine receptor inhibiting toxin</keyword>
<keyword id="KW-1015">Disulfide bond</keyword>
<keyword id="KW-0872">Ion channel impairing toxin</keyword>
<keyword id="KW-0528">Neurotoxin</keyword>
<keyword id="KW-0629">Postsynaptic neurotoxin</keyword>
<keyword id="KW-0964">Secreted</keyword>
<keyword id="KW-0732">Signal</keyword>
<keyword id="KW-0800">Toxin</keyword>
<sequence length="81" mass="9017">MKTLLLTLVVVTIVCLDLGYTLTCCNQQSSQPKTTTDCADDSCYKKTWKDHRGTRIERGCGCPQVKPGIKLECCKTNECNN</sequence>
<name>3S14_AIPLA</name>
<organism>
    <name type="scientific">Aipysurus laevis</name>
    <name type="common">Olive sea snake</name>
    <dbReference type="NCBI Taxonomy" id="8678"/>
    <lineage>
        <taxon>Eukaryota</taxon>
        <taxon>Metazoa</taxon>
        <taxon>Chordata</taxon>
        <taxon>Craniata</taxon>
        <taxon>Vertebrata</taxon>
        <taxon>Euteleostomi</taxon>
        <taxon>Lepidosauria</taxon>
        <taxon>Squamata</taxon>
        <taxon>Bifurcata</taxon>
        <taxon>Unidentata</taxon>
        <taxon>Episquamata</taxon>
        <taxon>Toxicofera</taxon>
        <taxon>Serpentes</taxon>
        <taxon>Colubroidea</taxon>
        <taxon>Elapidae</taxon>
        <taxon>Hydrophiinae</taxon>
        <taxon>Aipysurus</taxon>
    </lineage>
</organism>
<reference key="1">
    <citation type="journal article" date="1990" name="Toxicon">
        <title>Nucleotide sequence and structure analysis of cDNAs encoding short-chain neurotoxins from venom glands of a sea snake (Aipysurus laevis).</title>
        <authorList>
            <person name="Ducancel F."/>
            <person name="Guignery-Frelat G."/>
            <person name="Boulain J.-C."/>
            <person name="Menez A."/>
        </authorList>
    </citation>
    <scope>NUCLEOTIDE SEQUENCE [MRNA]</scope>
    <source>
        <tissue>Venom gland</tissue>
    </source>
</reference>
<comment type="function">
    <text evidence="3">Binds to muscle nicotinic acetylcholine receptor (nAChR) and inhibit acetylcholine from binding to the receptor, thereby impairing neuromuscular transmission.</text>
</comment>
<comment type="subcellular location">
    <subcellularLocation>
        <location evidence="1">Secreted</location>
    </subcellularLocation>
</comment>
<comment type="tissue specificity">
    <text evidence="5">Expressed by the venom gland.</text>
</comment>
<comment type="similarity">
    <text evidence="5">Belongs to the three-finger toxin family. Short-chain subfamily. Type I alpha-neurotoxin sub-subfamily.</text>
</comment>
<evidence type="ECO:0000250" key="1"/>
<evidence type="ECO:0000250" key="2">
    <source>
        <dbReference type="UniProtKB" id="P0C1Z0"/>
    </source>
</evidence>
<evidence type="ECO:0000250" key="3">
    <source>
        <dbReference type="UniProtKB" id="P60775"/>
    </source>
</evidence>
<evidence type="ECO:0000255" key="4"/>
<evidence type="ECO:0000305" key="5"/>